<gene>
    <name evidence="1" type="primary">groES</name>
    <name evidence="1" type="synonym">groS</name>
    <name type="ordered locus">LACR_0439</name>
</gene>
<feature type="chain" id="PRO_1000025285" description="Co-chaperonin GroES">
    <location>
        <begin position="1"/>
        <end position="94"/>
    </location>
</feature>
<organism>
    <name type="scientific">Lactococcus lactis subsp. cremoris (strain SK11)</name>
    <dbReference type="NCBI Taxonomy" id="272622"/>
    <lineage>
        <taxon>Bacteria</taxon>
        <taxon>Bacillati</taxon>
        <taxon>Bacillota</taxon>
        <taxon>Bacilli</taxon>
        <taxon>Lactobacillales</taxon>
        <taxon>Streptococcaceae</taxon>
        <taxon>Lactococcus</taxon>
        <taxon>Lactococcus cremoris subsp. cremoris</taxon>
    </lineage>
</organism>
<name>CH10_LACLS</name>
<keyword id="KW-0143">Chaperone</keyword>
<keyword id="KW-0963">Cytoplasm</keyword>
<proteinExistence type="inferred from homology"/>
<comment type="function">
    <text evidence="1">Together with the chaperonin GroEL, plays an essential role in assisting protein folding. The GroEL-GroES system forms a nano-cage that allows encapsulation of the non-native substrate proteins and provides a physical environment optimized to promote and accelerate protein folding. GroES binds to the apical surface of the GroEL ring, thereby capping the opening of the GroEL channel.</text>
</comment>
<comment type="subunit">
    <text evidence="1">Heptamer of 7 subunits arranged in a ring. Interacts with the chaperonin GroEL.</text>
</comment>
<comment type="subcellular location">
    <subcellularLocation>
        <location evidence="1">Cytoplasm</location>
    </subcellularLocation>
</comment>
<comment type="similarity">
    <text evidence="1">Belongs to the GroES chaperonin family.</text>
</comment>
<sequence>MLKPLENRVVLRVKEEEEKSMGGIVLTSASQEKPQTAEVIAVGEGKTTNHGTLISPLVKVGDTVIFEKFSGTTVKMDGEEFLILKDSDLLAIVE</sequence>
<evidence type="ECO:0000255" key="1">
    <source>
        <dbReference type="HAMAP-Rule" id="MF_00580"/>
    </source>
</evidence>
<protein>
    <recommendedName>
        <fullName evidence="1">Co-chaperonin GroES</fullName>
    </recommendedName>
    <alternativeName>
        <fullName evidence="1">10 kDa chaperonin</fullName>
    </alternativeName>
    <alternativeName>
        <fullName evidence="1">Chaperonin-10</fullName>
        <shortName evidence="1">Cpn10</shortName>
    </alternativeName>
</protein>
<accession>Q031S9</accession>
<reference key="1">
    <citation type="journal article" date="2006" name="Proc. Natl. Acad. Sci. U.S.A.">
        <title>Comparative genomics of the lactic acid bacteria.</title>
        <authorList>
            <person name="Makarova K.S."/>
            <person name="Slesarev A."/>
            <person name="Wolf Y.I."/>
            <person name="Sorokin A."/>
            <person name="Mirkin B."/>
            <person name="Koonin E.V."/>
            <person name="Pavlov A."/>
            <person name="Pavlova N."/>
            <person name="Karamychev V."/>
            <person name="Polouchine N."/>
            <person name="Shakhova V."/>
            <person name="Grigoriev I."/>
            <person name="Lou Y."/>
            <person name="Rohksar D."/>
            <person name="Lucas S."/>
            <person name="Huang K."/>
            <person name="Goodstein D.M."/>
            <person name="Hawkins T."/>
            <person name="Plengvidhya V."/>
            <person name="Welker D."/>
            <person name="Hughes J."/>
            <person name="Goh Y."/>
            <person name="Benson A."/>
            <person name="Baldwin K."/>
            <person name="Lee J.-H."/>
            <person name="Diaz-Muniz I."/>
            <person name="Dosti B."/>
            <person name="Smeianov V."/>
            <person name="Wechter W."/>
            <person name="Barabote R."/>
            <person name="Lorca G."/>
            <person name="Altermann E."/>
            <person name="Barrangou R."/>
            <person name="Ganesan B."/>
            <person name="Xie Y."/>
            <person name="Rawsthorne H."/>
            <person name="Tamir D."/>
            <person name="Parker C."/>
            <person name="Breidt F."/>
            <person name="Broadbent J.R."/>
            <person name="Hutkins R."/>
            <person name="O'Sullivan D."/>
            <person name="Steele J."/>
            <person name="Unlu G."/>
            <person name="Saier M.H. Jr."/>
            <person name="Klaenhammer T."/>
            <person name="Richardson P."/>
            <person name="Kozyavkin S."/>
            <person name="Weimer B.C."/>
            <person name="Mills D.A."/>
        </authorList>
    </citation>
    <scope>NUCLEOTIDE SEQUENCE [LARGE SCALE GENOMIC DNA]</scope>
    <source>
        <strain>SK11</strain>
    </source>
</reference>
<dbReference type="EMBL" id="CP000425">
    <property type="protein sequence ID" value="ABJ72043.1"/>
    <property type="molecule type" value="Genomic_DNA"/>
</dbReference>
<dbReference type="RefSeq" id="WP_011675464.1">
    <property type="nucleotide sequence ID" value="NC_008527.1"/>
</dbReference>
<dbReference type="SMR" id="Q031S9"/>
<dbReference type="KEGG" id="llc:LACR_0439"/>
<dbReference type="HOGENOM" id="CLU_132825_2_1_9"/>
<dbReference type="Proteomes" id="UP000000240">
    <property type="component" value="Chromosome"/>
</dbReference>
<dbReference type="GO" id="GO:0005737">
    <property type="term" value="C:cytoplasm"/>
    <property type="evidence" value="ECO:0007669"/>
    <property type="project" value="UniProtKB-SubCell"/>
</dbReference>
<dbReference type="GO" id="GO:0005524">
    <property type="term" value="F:ATP binding"/>
    <property type="evidence" value="ECO:0007669"/>
    <property type="project" value="InterPro"/>
</dbReference>
<dbReference type="GO" id="GO:0046872">
    <property type="term" value="F:metal ion binding"/>
    <property type="evidence" value="ECO:0007669"/>
    <property type="project" value="TreeGrafter"/>
</dbReference>
<dbReference type="GO" id="GO:0044183">
    <property type="term" value="F:protein folding chaperone"/>
    <property type="evidence" value="ECO:0007669"/>
    <property type="project" value="InterPro"/>
</dbReference>
<dbReference type="GO" id="GO:0051087">
    <property type="term" value="F:protein-folding chaperone binding"/>
    <property type="evidence" value="ECO:0007669"/>
    <property type="project" value="TreeGrafter"/>
</dbReference>
<dbReference type="GO" id="GO:0051082">
    <property type="term" value="F:unfolded protein binding"/>
    <property type="evidence" value="ECO:0007669"/>
    <property type="project" value="TreeGrafter"/>
</dbReference>
<dbReference type="GO" id="GO:0051085">
    <property type="term" value="P:chaperone cofactor-dependent protein refolding"/>
    <property type="evidence" value="ECO:0007669"/>
    <property type="project" value="TreeGrafter"/>
</dbReference>
<dbReference type="CDD" id="cd00320">
    <property type="entry name" value="cpn10"/>
    <property type="match status" value="1"/>
</dbReference>
<dbReference type="FunFam" id="2.30.33.40:FF:000001">
    <property type="entry name" value="10 kDa chaperonin"/>
    <property type="match status" value="1"/>
</dbReference>
<dbReference type="Gene3D" id="2.30.33.40">
    <property type="entry name" value="GroES chaperonin"/>
    <property type="match status" value="1"/>
</dbReference>
<dbReference type="HAMAP" id="MF_00580">
    <property type="entry name" value="CH10"/>
    <property type="match status" value="1"/>
</dbReference>
<dbReference type="InterPro" id="IPR020818">
    <property type="entry name" value="Chaperonin_GroES"/>
</dbReference>
<dbReference type="InterPro" id="IPR037124">
    <property type="entry name" value="Chaperonin_GroES_sf"/>
</dbReference>
<dbReference type="InterPro" id="IPR018369">
    <property type="entry name" value="Chaprnonin_Cpn10_CS"/>
</dbReference>
<dbReference type="InterPro" id="IPR011032">
    <property type="entry name" value="GroES-like_sf"/>
</dbReference>
<dbReference type="NCBIfam" id="NF001531">
    <property type="entry name" value="PRK00364.2-2"/>
    <property type="match status" value="1"/>
</dbReference>
<dbReference type="NCBIfam" id="NF001533">
    <property type="entry name" value="PRK00364.2-4"/>
    <property type="match status" value="1"/>
</dbReference>
<dbReference type="NCBIfam" id="NF001534">
    <property type="entry name" value="PRK00364.2-5"/>
    <property type="match status" value="1"/>
</dbReference>
<dbReference type="PANTHER" id="PTHR10772">
    <property type="entry name" value="10 KDA HEAT SHOCK PROTEIN"/>
    <property type="match status" value="1"/>
</dbReference>
<dbReference type="PANTHER" id="PTHR10772:SF58">
    <property type="entry name" value="CO-CHAPERONIN GROES"/>
    <property type="match status" value="1"/>
</dbReference>
<dbReference type="Pfam" id="PF00166">
    <property type="entry name" value="Cpn10"/>
    <property type="match status" value="1"/>
</dbReference>
<dbReference type="PRINTS" id="PR00297">
    <property type="entry name" value="CHAPERONIN10"/>
</dbReference>
<dbReference type="SMART" id="SM00883">
    <property type="entry name" value="Cpn10"/>
    <property type="match status" value="1"/>
</dbReference>
<dbReference type="SUPFAM" id="SSF50129">
    <property type="entry name" value="GroES-like"/>
    <property type="match status" value="1"/>
</dbReference>
<dbReference type="PROSITE" id="PS00681">
    <property type="entry name" value="CHAPERONINS_CPN10"/>
    <property type="match status" value="1"/>
</dbReference>